<gene>
    <name type="primary">EVL</name>
</gene>
<protein>
    <recommendedName>
        <fullName>Ena/VASP-like protein</fullName>
    </recommendedName>
    <alternativeName>
        <fullName>Ena/vasodilator-stimulated phosphoprotein-like</fullName>
    </alternativeName>
</protein>
<reference key="1">
    <citation type="submission" date="2004-11" db="EMBL/GenBank/DDBJ databases">
        <authorList>
            <consortium name="The German cDNA consortium"/>
        </authorList>
    </citation>
    <scope>NUCLEOTIDE SEQUENCE [LARGE SCALE MRNA]</scope>
    <source>
        <tissue>Heart</tissue>
    </source>
</reference>
<dbReference type="EMBL" id="CR859858">
    <property type="protein sequence ID" value="CAH92014.1"/>
    <property type="molecule type" value="mRNA"/>
</dbReference>
<dbReference type="RefSeq" id="NP_001126168.1">
    <property type="nucleotide sequence ID" value="NM_001132696.1"/>
</dbReference>
<dbReference type="SMR" id="Q5R896"/>
<dbReference type="FunCoup" id="Q5R896">
    <property type="interactions" value="621"/>
</dbReference>
<dbReference type="STRING" id="9601.ENSPPYP00000006977"/>
<dbReference type="Ensembl" id="ENSPPYT00000007252.2">
    <property type="protein sequence ID" value="ENSPPYP00000006977.1"/>
    <property type="gene ID" value="ENSPPYG00000006138.3"/>
</dbReference>
<dbReference type="GeneID" id="100173130"/>
<dbReference type="KEGG" id="pon:100173130"/>
<dbReference type="CTD" id="51466"/>
<dbReference type="eggNOG" id="KOG4590">
    <property type="taxonomic scope" value="Eukaryota"/>
</dbReference>
<dbReference type="GeneTree" id="ENSGT00940000157826"/>
<dbReference type="HOGENOM" id="CLU_017790_0_0_1"/>
<dbReference type="InParanoid" id="Q5R896"/>
<dbReference type="OMA" id="RTHFGIN"/>
<dbReference type="OrthoDB" id="31170at2759"/>
<dbReference type="TreeFam" id="TF321411"/>
<dbReference type="Proteomes" id="UP000001595">
    <property type="component" value="Chromosome 14"/>
</dbReference>
<dbReference type="GO" id="GO:0005737">
    <property type="term" value="C:cytoplasm"/>
    <property type="evidence" value="ECO:0007669"/>
    <property type="project" value="UniProtKB-KW"/>
</dbReference>
<dbReference type="GO" id="GO:0030027">
    <property type="term" value="C:lamellipodium"/>
    <property type="evidence" value="ECO:0007669"/>
    <property type="project" value="UniProtKB-SubCell"/>
</dbReference>
<dbReference type="GO" id="GO:0001725">
    <property type="term" value="C:stress fiber"/>
    <property type="evidence" value="ECO:0007669"/>
    <property type="project" value="UniProtKB-SubCell"/>
</dbReference>
<dbReference type="GO" id="GO:0003779">
    <property type="term" value="F:actin binding"/>
    <property type="evidence" value="ECO:0007669"/>
    <property type="project" value="UniProtKB-KW"/>
</dbReference>
<dbReference type="GO" id="GO:0005522">
    <property type="term" value="F:profilin binding"/>
    <property type="evidence" value="ECO:0007669"/>
    <property type="project" value="TreeGrafter"/>
</dbReference>
<dbReference type="GO" id="GO:0017124">
    <property type="term" value="F:SH3 domain binding"/>
    <property type="evidence" value="ECO:0007669"/>
    <property type="project" value="UniProtKB-KW"/>
</dbReference>
<dbReference type="GO" id="GO:0008154">
    <property type="term" value="P:actin polymerization or depolymerization"/>
    <property type="evidence" value="ECO:0007669"/>
    <property type="project" value="InterPro"/>
</dbReference>
<dbReference type="GO" id="GO:0010633">
    <property type="term" value="P:negative regulation of epithelial cell migration"/>
    <property type="evidence" value="ECO:0007669"/>
    <property type="project" value="Ensembl"/>
</dbReference>
<dbReference type="GO" id="GO:1900028">
    <property type="term" value="P:negative regulation of ruffle assembly"/>
    <property type="evidence" value="ECO:0007669"/>
    <property type="project" value="Ensembl"/>
</dbReference>
<dbReference type="GO" id="GO:0030838">
    <property type="term" value="P:positive regulation of actin filament polymerization"/>
    <property type="evidence" value="ECO:0007669"/>
    <property type="project" value="TreeGrafter"/>
</dbReference>
<dbReference type="GO" id="GO:0051496">
    <property type="term" value="P:positive regulation of stress fiber assembly"/>
    <property type="evidence" value="ECO:0007669"/>
    <property type="project" value="Ensembl"/>
</dbReference>
<dbReference type="GO" id="GO:0051289">
    <property type="term" value="P:protein homotetramerization"/>
    <property type="evidence" value="ECO:0007669"/>
    <property type="project" value="InterPro"/>
</dbReference>
<dbReference type="CDD" id="cd01207">
    <property type="entry name" value="EVH1_Ena_VASP-like"/>
    <property type="match status" value="1"/>
</dbReference>
<dbReference type="CDD" id="cd22185">
    <property type="entry name" value="WH2_hVASP-like"/>
    <property type="match status" value="1"/>
</dbReference>
<dbReference type="FunFam" id="1.20.5.1160:FF:000004">
    <property type="entry name" value="Enah/Vasp-like, isoform CRA_a"/>
    <property type="match status" value="1"/>
</dbReference>
<dbReference type="FunFam" id="2.30.29.30:FF:000071">
    <property type="entry name" value="Enah/Vasp-like, isoform CRA_a"/>
    <property type="match status" value="1"/>
</dbReference>
<dbReference type="Gene3D" id="2.30.29.30">
    <property type="entry name" value="Pleckstrin-homology domain (PH domain)/Phosphotyrosine-binding domain (PTB)"/>
    <property type="match status" value="1"/>
</dbReference>
<dbReference type="Gene3D" id="1.20.5.1160">
    <property type="entry name" value="Vasodilator-stimulated phosphoprotein"/>
    <property type="match status" value="1"/>
</dbReference>
<dbReference type="InterPro" id="IPR011993">
    <property type="entry name" value="PH-like_dom_sf"/>
</dbReference>
<dbReference type="InterPro" id="IPR017354">
    <property type="entry name" value="VASP/EVL"/>
</dbReference>
<dbReference type="InterPro" id="IPR038023">
    <property type="entry name" value="VASP_sf"/>
</dbReference>
<dbReference type="InterPro" id="IPR014885">
    <property type="entry name" value="VASP_tetra"/>
</dbReference>
<dbReference type="InterPro" id="IPR000697">
    <property type="entry name" value="WH1/EVH1_dom"/>
</dbReference>
<dbReference type="PANTHER" id="PTHR11202:SF4">
    <property type="entry name" value="ENA_VASP-LIKE PROTEIN"/>
    <property type="match status" value="1"/>
</dbReference>
<dbReference type="PANTHER" id="PTHR11202">
    <property type="entry name" value="SPROUTY-RELATED, EVH1 DOMAIN-CONTAINING PROTEIN FAMILY MEMBER"/>
    <property type="match status" value="1"/>
</dbReference>
<dbReference type="Pfam" id="PF08776">
    <property type="entry name" value="VASP_tetra"/>
    <property type="match status" value="1"/>
</dbReference>
<dbReference type="Pfam" id="PF00568">
    <property type="entry name" value="WH1"/>
    <property type="match status" value="1"/>
</dbReference>
<dbReference type="PIRSF" id="PIRSF038010">
    <property type="entry name" value="Vasodilator_Phospo"/>
    <property type="match status" value="1"/>
</dbReference>
<dbReference type="SMART" id="SM00461">
    <property type="entry name" value="WH1"/>
    <property type="match status" value="1"/>
</dbReference>
<dbReference type="SUPFAM" id="SSF50729">
    <property type="entry name" value="PH domain-like"/>
    <property type="match status" value="1"/>
</dbReference>
<dbReference type="SUPFAM" id="SSF118370">
    <property type="entry name" value="Vasodilator-stimulated phosphoprotein, VASP, tetramerisation domain"/>
    <property type="match status" value="1"/>
</dbReference>
<dbReference type="PROSITE" id="PS50229">
    <property type="entry name" value="WH1"/>
    <property type="match status" value="1"/>
</dbReference>
<sequence length="422" mass="45314">MFAFEEFSEQSICQARASVMVYDDTSKKWVPIKPGQQGFSRINIYHNTASNTFRVVGVKLQDQQVVINYSIVKGLKYNQATPTFHQWRDARQVYGLNFASKEEATTFSNAMLFALNIMNSQEGGPSSQRQVQNGPSPDEMDIQRRQVMEQHQQQRQESLERRTSATGPILPPGHPSSAASAPVSCSGPPPPPPPPVPPPPTGATPPPPPPLPAGGAQGSSHDESSVSGLAAAIAGAKLRRVQRPEDASGGSSPSGTSKSDANRASSGGGGGGLMEEMNKLLAKRRKAASQSDKPAEKKEDESQTEDPSTSPSPGTRAASQPPNSSEAGRKPWERSNSVEKPVSSILSRTPSVAKSPEAKSPLQSQPHSRMKPAGSVNDMALDAFDLDRMKQEILEEVVRELHKVKDEIIDAIRQELSGISTT</sequence>
<feature type="chain" id="PRO_0000227758" description="Ena/VASP-like protein">
    <location>
        <begin position="1"/>
        <end position="422"/>
    </location>
</feature>
<feature type="domain" description="WH1" evidence="6">
    <location>
        <begin position="4"/>
        <end position="118"/>
    </location>
</feature>
<feature type="region of interest" description="Disordered" evidence="7">
    <location>
        <begin position="120"/>
        <end position="139"/>
    </location>
</feature>
<feature type="region of interest" description="Disordered" evidence="7">
    <location>
        <begin position="147"/>
        <end position="375"/>
    </location>
</feature>
<feature type="region of interest" description="EVH2">
    <location>
        <begin position="228"/>
        <end position="419"/>
    </location>
</feature>
<feature type="region of interest" description="EVH2 block A">
    <location>
        <begin position="228"/>
        <end position="248"/>
    </location>
</feature>
<feature type="region of interest" description="EVH2 block B">
    <location>
        <begin position="271"/>
        <end position="288"/>
    </location>
</feature>
<feature type="region of interest" description="Required for interaction with ZDHHC17" evidence="4">
    <location>
        <begin position="348"/>
        <end position="368"/>
    </location>
</feature>
<feature type="region of interest" description="EVH2 block C">
    <location>
        <begin position="385"/>
        <end position="419"/>
    </location>
</feature>
<feature type="coiled-coil region" evidence="5">
    <location>
        <begin position="388"/>
        <end position="414"/>
    </location>
</feature>
<feature type="short sequence motif" description="KLKR">
    <location>
        <begin position="237"/>
        <end position="240"/>
    </location>
</feature>
<feature type="compositionally biased region" description="Polar residues" evidence="7">
    <location>
        <begin position="120"/>
        <end position="135"/>
    </location>
</feature>
<feature type="compositionally biased region" description="Basic and acidic residues" evidence="7">
    <location>
        <begin position="147"/>
        <end position="163"/>
    </location>
</feature>
<feature type="compositionally biased region" description="Low complexity" evidence="7">
    <location>
        <begin position="175"/>
        <end position="186"/>
    </location>
</feature>
<feature type="compositionally biased region" description="Pro residues" evidence="7">
    <location>
        <begin position="187"/>
        <end position="212"/>
    </location>
</feature>
<feature type="compositionally biased region" description="Low complexity" evidence="7">
    <location>
        <begin position="248"/>
        <end position="259"/>
    </location>
</feature>
<feature type="compositionally biased region" description="Polar residues" evidence="7">
    <location>
        <begin position="305"/>
        <end position="326"/>
    </location>
</feature>
<feature type="compositionally biased region" description="Basic and acidic residues" evidence="7">
    <location>
        <begin position="327"/>
        <end position="337"/>
    </location>
</feature>
<feature type="modified residue" description="Phosphoserine" evidence="2">
    <location>
        <position position="136"/>
    </location>
</feature>
<feature type="modified residue" description="Phosphoserine" evidence="4">
    <location>
        <position position="252"/>
    </location>
</feature>
<feature type="modified residue" description="Phosphoserine" evidence="2">
    <location>
        <position position="265"/>
    </location>
</feature>
<feature type="modified residue" description="Phosphoserine" evidence="4">
    <location>
        <position position="310"/>
    </location>
</feature>
<feature type="modified residue" description="Phosphoserine" evidence="4">
    <location>
        <position position="312"/>
    </location>
</feature>
<feature type="modified residue" description="Phosphoserine" evidence="4">
    <location>
        <position position="335"/>
    </location>
</feature>
<feature type="modified residue" description="Phosphoserine" evidence="4">
    <location>
        <position position="337"/>
    </location>
</feature>
<feature type="modified residue" description="Phosphoserine" evidence="4">
    <location>
        <position position="347"/>
    </location>
</feature>
<feature type="modified residue" description="Phosphoserine" evidence="4">
    <location>
        <position position="355"/>
    </location>
</feature>
<feature type="modified residue" description="Phosphoserine" evidence="4">
    <location>
        <position position="360"/>
    </location>
</feature>
<feature type="modified residue" description="Phosphoserine" evidence="4">
    <location>
        <position position="375"/>
    </location>
</feature>
<accession>Q5R896</accession>
<comment type="function">
    <text evidence="1">Ena/VASP proteins are actin-associated proteins involved in a range of processes dependent on cytoskeleton remodeling and cell polarity such as axon guidance and lamellipodial and filopodial dynamics in migrating cells. EVL enhances actin nucleation and polymerization (By similarity).</text>
</comment>
<comment type="subunit">
    <text evidence="3 4">Homotetramer (By similarity). Binds to the SH3 domains of ABL1, LYN and SRC. Also binds to profilin, with preference for isoform IIa of PFN2, and the WW domain of APBB1/FE65. Binds to SEMA6A. Interacts, via the Pro-rich region, with the C-terminal SH3 domain of DNMBP. Interacts with RAPH1. Binds, via the EVH1 domain, the Pro-rich domain of Listeria monocytogenes actA (By similarity). Binds, via the EVH1 domain, the Pro-rich domain of ZYX. Interacts with FYB1. Interacts with ZDHHC17 (By similarity).</text>
</comment>
<comment type="subcellular location">
    <subcellularLocation>
        <location evidence="3">Cytoplasm</location>
        <location evidence="3">Cytoskeleton</location>
    </subcellularLocation>
    <subcellularLocation>
        <location evidence="3">Cytoplasm</location>
        <location evidence="3">Cytoskeleton</location>
        <location evidence="3">Stress fiber</location>
    </subcellularLocation>
    <subcellularLocation>
        <location evidence="3">Cell projection</location>
        <location evidence="3">Lamellipodium</location>
    </subcellularLocation>
    <text evidence="3">Targeted to the leading edge of lamellipodia and the distal tip of stress fibers through interaction with a number of proteins. In activated T-cells, localizes to the F-actin collar and the distal tip of microspikes.</text>
</comment>
<comment type="domain">
    <text>The EVH2 domain is comprised of 3 regions. Block A is a thymosin-like domain required for G-actin binding. The KLKR motif within this block is essential for the G-actin binding and for actin polymerization. Block B is required for F-actin binding and subcellular location, and Block C for tetramerization.</text>
</comment>
<comment type="PTM">
    <text evidence="1">Phosphorylated by PKA; phosphorylation abolishes binding to SH3 domains of ABL and SRC.</text>
</comment>
<comment type="similarity">
    <text evidence="8">Belongs to the Ena/VASP family.</text>
</comment>
<organism>
    <name type="scientific">Pongo abelii</name>
    <name type="common">Sumatran orangutan</name>
    <name type="synonym">Pongo pygmaeus abelii</name>
    <dbReference type="NCBI Taxonomy" id="9601"/>
    <lineage>
        <taxon>Eukaryota</taxon>
        <taxon>Metazoa</taxon>
        <taxon>Chordata</taxon>
        <taxon>Craniata</taxon>
        <taxon>Vertebrata</taxon>
        <taxon>Euteleostomi</taxon>
        <taxon>Mammalia</taxon>
        <taxon>Eutheria</taxon>
        <taxon>Euarchontoglires</taxon>
        <taxon>Primates</taxon>
        <taxon>Haplorrhini</taxon>
        <taxon>Catarrhini</taxon>
        <taxon>Hominidae</taxon>
        <taxon>Pongo</taxon>
    </lineage>
</organism>
<keyword id="KW-0009">Actin-binding</keyword>
<keyword id="KW-0966">Cell projection</keyword>
<keyword id="KW-0175">Coiled coil</keyword>
<keyword id="KW-0963">Cytoplasm</keyword>
<keyword id="KW-0206">Cytoskeleton</keyword>
<keyword id="KW-0597">Phosphoprotein</keyword>
<keyword id="KW-1185">Reference proteome</keyword>
<keyword id="KW-0729">SH3-binding</keyword>
<proteinExistence type="evidence at transcript level"/>
<name>EVL_PONAB</name>
<evidence type="ECO:0000250" key="1"/>
<evidence type="ECO:0000250" key="2">
    <source>
        <dbReference type="UniProtKB" id="O08719"/>
    </source>
</evidence>
<evidence type="ECO:0000250" key="3">
    <source>
        <dbReference type="UniProtKB" id="P70429"/>
    </source>
</evidence>
<evidence type="ECO:0000250" key="4">
    <source>
        <dbReference type="UniProtKB" id="Q9UI08"/>
    </source>
</evidence>
<evidence type="ECO:0000255" key="5"/>
<evidence type="ECO:0000255" key="6">
    <source>
        <dbReference type="PROSITE-ProRule" id="PRU00410"/>
    </source>
</evidence>
<evidence type="ECO:0000256" key="7">
    <source>
        <dbReference type="SAM" id="MobiDB-lite"/>
    </source>
</evidence>
<evidence type="ECO:0000305" key="8"/>